<sequence>MASPSICLLAALLALVSWQAIASDPSPLQDFCVADMHSPVLVNGFACLDPKYVNADHFFKAAMLDTPRKTNKVGSNVTLINVMQIPGLNTLGISIARIDYAPLGENPPHTHPRATEILTVLEGTLYVGFVTSNPNNTLFSKVLNKGDVFVFPEGLIHFQFNPNPHQPAVAIAALSSQNPGAITIANAVFGSKPPISDIVLAKAFQVEKGTIDWLQAQFWENNHY</sequence>
<gene>
    <name type="primary">GLP2</name>
    <name type="ordered locus">Os08g0189900</name>
    <name type="ordered locus">LOC_Os08g09060</name>
    <name type="ORF">B1099H05.39</name>
    <name type="ORF">P0610E02.15</name>
</gene>
<feature type="signal peptide" evidence="2">
    <location>
        <begin position="1"/>
        <end position="22"/>
    </location>
</feature>
<feature type="chain" id="PRO_0000365522" description="Germin-like protein 8-10">
    <location>
        <begin position="23"/>
        <end position="224"/>
    </location>
</feature>
<feature type="domain" description="Cupin type-1" evidence="2">
    <location>
        <begin position="62"/>
        <end position="212"/>
    </location>
</feature>
<feature type="binding site" evidence="1">
    <location>
        <position position="109"/>
    </location>
    <ligand>
        <name>Mn(2+)</name>
        <dbReference type="ChEBI" id="CHEBI:29035"/>
    </ligand>
</feature>
<feature type="binding site" evidence="1">
    <location>
        <position position="111"/>
    </location>
    <ligand>
        <name>Mn(2+)</name>
        <dbReference type="ChEBI" id="CHEBI:29035"/>
    </ligand>
</feature>
<feature type="binding site" evidence="1">
    <location>
        <position position="116"/>
    </location>
    <ligand>
        <name>Mn(2+)</name>
        <dbReference type="ChEBI" id="CHEBI:29035"/>
    </ligand>
</feature>
<feature type="binding site" evidence="1">
    <location>
        <position position="157"/>
    </location>
    <ligand>
        <name>Mn(2+)</name>
        <dbReference type="ChEBI" id="CHEBI:29035"/>
    </ligand>
</feature>
<feature type="glycosylation site" description="N-linked (GlcNAc...) asparagine" evidence="2">
    <location>
        <position position="76"/>
    </location>
</feature>
<feature type="glycosylation site" description="N-linked (GlcNAc...) asparagine" evidence="2">
    <location>
        <position position="135"/>
    </location>
</feature>
<feature type="disulfide bond" evidence="1">
    <location>
        <begin position="32"/>
        <end position="47"/>
    </location>
</feature>
<feature type="sequence conflict" description="In Ref. 1; AAD43972." evidence="4" ref="1">
    <original>S</original>
    <variation>P</variation>
    <location>
        <position position="191"/>
    </location>
</feature>
<name>GL810_ORYSJ</name>
<accession>Q6YZ97</accession>
<accession>A0A0P0XCE9</accession>
<accession>Q9XH59</accession>
<proteinExistence type="evidence at transcript level"/>
<comment type="function">
    <text evidence="3">Plays a role in broad-spectrum disease resistance. Probably has no oxalate oxidase activity even if the active site is conserved.</text>
</comment>
<comment type="subunit">
    <text evidence="1">Oligomer (believed to be a pentamer but probably hexamer).</text>
</comment>
<comment type="subcellular location">
    <subcellularLocation>
        <location evidence="1">Secreted</location>
        <location evidence="1">Extracellular space</location>
        <location evidence="1">Apoplast</location>
    </subcellularLocation>
</comment>
<comment type="miscellaneous">
    <text>Member of the 12 germin-like protein gene cluster located on chromosome 8 in the major-effect quantitative trait loci (QTL) for fungal blast resistance. Partial suppression of the 12 germin-like protein genes increases susceptibility to the fungal pathogens causing rice blast and sheath blight diseases.</text>
</comment>
<comment type="similarity">
    <text evidence="4">Belongs to the germin family.</text>
</comment>
<dbReference type="EMBL" id="AF141879">
    <property type="protein sequence ID" value="AAD43972.1"/>
    <property type="molecule type" value="mRNA"/>
</dbReference>
<dbReference type="EMBL" id="AP005505">
    <property type="protein sequence ID" value="BAD05741.1"/>
    <property type="molecule type" value="Genomic_DNA"/>
</dbReference>
<dbReference type="EMBL" id="AP005531">
    <property type="protein sequence ID" value="BAD05780.1"/>
    <property type="molecule type" value="Genomic_DNA"/>
</dbReference>
<dbReference type="EMBL" id="AP008214">
    <property type="protein sequence ID" value="BAF23077.1"/>
    <property type="molecule type" value="Genomic_DNA"/>
</dbReference>
<dbReference type="EMBL" id="AP014964">
    <property type="protein sequence ID" value="BAT04159.1"/>
    <property type="molecule type" value="Genomic_DNA"/>
</dbReference>
<dbReference type="RefSeq" id="XP_015651068.1">
    <property type="nucleotide sequence ID" value="XM_015795582.1"/>
</dbReference>
<dbReference type="SMR" id="Q6YZ97"/>
<dbReference type="FunCoup" id="Q6YZ97">
    <property type="interactions" value="40"/>
</dbReference>
<dbReference type="STRING" id="39947.Q6YZ97"/>
<dbReference type="GlyCosmos" id="Q6YZ97">
    <property type="glycosylation" value="2 sites, No reported glycans"/>
</dbReference>
<dbReference type="PaxDb" id="39947-Q6YZ97"/>
<dbReference type="EnsemblPlants" id="Os08t0189900-01">
    <property type="protein sequence ID" value="Os08t0189900-01"/>
    <property type="gene ID" value="Os08g0189900"/>
</dbReference>
<dbReference type="Gramene" id="Os08t0189900-01">
    <property type="protein sequence ID" value="Os08t0189900-01"/>
    <property type="gene ID" value="Os08g0189900"/>
</dbReference>
<dbReference type="KEGG" id="dosa:Os08g0189900"/>
<dbReference type="eggNOG" id="ENOG502QQ4A">
    <property type="taxonomic scope" value="Eukaryota"/>
</dbReference>
<dbReference type="HOGENOM" id="CLU_015790_0_0_1"/>
<dbReference type="InParanoid" id="Q6YZ97"/>
<dbReference type="OMA" id="TQMAASY"/>
<dbReference type="OrthoDB" id="1850619at2759"/>
<dbReference type="Proteomes" id="UP000000763">
    <property type="component" value="Chromosome 8"/>
</dbReference>
<dbReference type="Proteomes" id="UP000059680">
    <property type="component" value="Chromosome 8"/>
</dbReference>
<dbReference type="GO" id="GO:0048046">
    <property type="term" value="C:apoplast"/>
    <property type="evidence" value="ECO:0007669"/>
    <property type="project" value="UniProtKB-SubCell"/>
</dbReference>
<dbReference type="GO" id="GO:0030145">
    <property type="term" value="F:manganese ion binding"/>
    <property type="evidence" value="ECO:0007669"/>
    <property type="project" value="InterPro"/>
</dbReference>
<dbReference type="CDD" id="cd02241">
    <property type="entry name" value="cupin_OxOx"/>
    <property type="match status" value="1"/>
</dbReference>
<dbReference type="FunFam" id="2.60.120.10:FF:000005">
    <property type="entry name" value="Germin-like protein subfamily 1 member 8"/>
    <property type="match status" value="1"/>
</dbReference>
<dbReference type="Gene3D" id="2.60.120.10">
    <property type="entry name" value="Jelly Rolls"/>
    <property type="match status" value="1"/>
</dbReference>
<dbReference type="InterPro" id="IPR006045">
    <property type="entry name" value="Cupin_1"/>
</dbReference>
<dbReference type="InterPro" id="IPR001929">
    <property type="entry name" value="Germin"/>
</dbReference>
<dbReference type="InterPro" id="IPR019780">
    <property type="entry name" value="Germin_Mn-BS"/>
</dbReference>
<dbReference type="InterPro" id="IPR014710">
    <property type="entry name" value="RmlC-like_jellyroll"/>
</dbReference>
<dbReference type="InterPro" id="IPR011051">
    <property type="entry name" value="RmlC_Cupin_sf"/>
</dbReference>
<dbReference type="PANTHER" id="PTHR31238">
    <property type="entry name" value="GERMIN-LIKE PROTEIN SUBFAMILY 3 MEMBER 3"/>
    <property type="match status" value="1"/>
</dbReference>
<dbReference type="Pfam" id="PF00190">
    <property type="entry name" value="Cupin_1"/>
    <property type="match status" value="1"/>
</dbReference>
<dbReference type="PRINTS" id="PR00325">
    <property type="entry name" value="GERMIN"/>
</dbReference>
<dbReference type="SMART" id="SM00835">
    <property type="entry name" value="Cupin_1"/>
    <property type="match status" value="1"/>
</dbReference>
<dbReference type="SUPFAM" id="SSF51182">
    <property type="entry name" value="RmlC-like cupins"/>
    <property type="match status" value="1"/>
</dbReference>
<dbReference type="PROSITE" id="PS00725">
    <property type="entry name" value="GERMIN"/>
    <property type="match status" value="1"/>
</dbReference>
<organism>
    <name type="scientific">Oryza sativa subsp. japonica</name>
    <name type="common">Rice</name>
    <dbReference type="NCBI Taxonomy" id="39947"/>
    <lineage>
        <taxon>Eukaryota</taxon>
        <taxon>Viridiplantae</taxon>
        <taxon>Streptophyta</taxon>
        <taxon>Embryophyta</taxon>
        <taxon>Tracheophyta</taxon>
        <taxon>Spermatophyta</taxon>
        <taxon>Magnoliopsida</taxon>
        <taxon>Liliopsida</taxon>
        <taxon>Poales</taxon>
        <taxon>Poaceae</taxon>
        <taxon>BOP clade</taxon>
        <taxon>Oryzoideae</taxon>
        <taxon>Oryzeae</taxon>
        <taxon>Oryzinae</taxon>
        <taxon>Oryza</taxon>
        <taxon>Oryza sativa</taxon>
    </lineage>
</organism>
<reference key="1">
    <citation type="submission" date="1999-04" db="EMBL/GenBank/DDBJ databases">
        <title>Stress responsive rice root germin-like proteins.</title>
        <authorList>
            <person name="Naqvi S.M.S."/>
            <person name="Takahashi M."/>
        </authorList>
    </citation>
    <scope>NUCLEOTIDE SEQUENCE [MRNA]</scope>
    <source>
        <strain>cv. Nipponbare</strain>
        <tissue>Root</tissue>
    </source>
</reference>
<reference key="2">
    <citation type="journal article" date="2005" name="Nature">
        <title>The map-based sequence of the rice genome.</title>
        <authorList>
            <consortium name="International rice genome sequencing project (IRGSP)"/>
        </authorList>
    </citation>
    <scope>NUCLEOTIDE SEQUENCE [LARGE SCALE GENOMIC DNA]</scope>
    <source>
        <strain>cv. Nipponbare</strain>
    </source>
</reference>
<reference key="3">
    <citation type="journal article" date="2008" name="Nucleic Acids Res.">
        <title>The rice annotation project database (RAP-DB): 2008 update.</title>
        <authorList>
            <consortium name="The rice annotation project (RAP)"/>
        </authorList>
    </citation>
    <scope>GENOME REANNOTATION</scope>
    <source>
        <strain>cv. Nipponbare</strain>
    </source>
</reference>
<reference key="4">
    <citation type="journal article" date="2013" name="Rice">
        <title>Improvement of the Oryza sativa Nipponbare reference genome using next generation sequence and optical map data.</title>
        <authorList>
            <person name="Kawahara Y."/>
            <person name="de la Bastide M."/>
            <person name="Hamilton J.P."/>
            <person name="Kanamori H."/>
            <person name="McCombie W.R."/>
            <person name="Ouyang S."/>
            <person name="Schwartz D.C."/>
            <person name="Tanaka T."/>
            <person name="Wu J."/>
            <person name="Zhou S."/>
            <person name="Childs K.L."/>
            <person name="Davidson R.M."/>
            <person name="Lin H."/>
            <person name="Quesada-Ocampo L."/>
            <person name="Vaillancourt B."/>
            <person name="Sakai H."/>
            <person name="Lee S.S."/>
            <person name="Kim J."/>
            <person name="Numa H."/>
            <person name="Itoh T."/>
            <person name="Buell C.R."/>
            <person name="Matsumoto T."/>
        </authorList>
    </citation>
    <scope>GENOME REANNOTATION</scope>
    <source>
        <strain>cv. Nipponbare</strain>
    </source>
</reference>
<reference key="5">
    <citation type="journal article" date="2009" name="Plant Physiol.">
        <title>A germin-like protein gene family functions as a complex quantitative trait locus conferring broad-spectrum disease resistance in rice.</title>
        <authorList>
            <person name="Manosalva P.M."/>
            <person name="Davidson R.M."/>
            <person name="Liu B."/>
            <person name="Zhu X."/>
            <person name="Hulbert S.H."/>
            <person name="Leung H."/>
            <person name="Leach J.E."/>
        </authorList>
    </citation>
    <scope>FUNCTION</scope>
</reference>
<keyword id="KW-0052">Apoplast</keyword>
<keyword id="KW-1015">Disulfide bond</keyword>
<keyword id="KW-0325">Glycoprotein</keyword>
<keyword id="KW-0464">Manganese</keyword>
<keyword id="KW-0479">Metal-binding</keyword>
<keyword id="KW-1185">Reference proteome</keyword>
<keyword id="KW-0964">Secreted</keyword>
<keyword id="KW-0732">Signal</keyword>
<protein>
    <recommendedName>
        <fullName>Germin-like protein 8-10</fullName>
    </recommendedName>
    <alternativeName>
        <fullName>Germin-like protein 2</fullName>
    </alternativeName>
</protein>
<evidence type="ECO:0000250" key="1"/>
<evidence type="ECO:0000255" key="2"/>
<evidence type="ECO:0000269" key="3">
    <source>
    </source>
</evidence>
<evidence type="ECO:0000305" key="4"/>